<accession>Q14DN9</accession>
<accession>Q8BZP7</accession>
<keyword id="KW-0025">Alternative splicing</keyword>
<keyword id="KW-0040">ANK repeat</keyword>
<keyword id="KW-1185">Reference proteome</keyword>
<keyword id="KW-0677">Repeat</keyword>
<gene>
    <name type="primary">Ankdd1b</name>
</gene>
<sequence length="521" mass="58456">MNPESAQGHGARAPMLQAARGLKANLRDVATRPWRSLARMPKPEVQDPETAAAGHEGLLAIERSFQNAAKSSNLDLMEKLFEKKVNINAVNNMNRTALHFAVGRNSLSAVDFLLSHKARVDVADKHGLTVIHLAAWSGSFEIMLMLVKAGADQRAKNQEGMNALHLAAQNNNLHIVDYLIHDLHLHDLNQPNERGRKPFHLAAERGHVEMIEKLIFLNLHTSEKDKDGNTALHLAAMHGHSPAVQVLLTQWSEVNESNELNVSALQTATRNGHTALVNFLLGENADLQQQKESKEPPLHLAVINNRPAVVNSLLSARHDVDVLDQRRQTPLHVAADLGNVELVETLLKAGCNLKITDKQGKTALAVAARSQHSLVVDMLIKAERYYAWREEHRESIQDSAVSSTLTFKQDHSLETRQIRTLLWNLAYRQLKKKDWQRLARLWSFTEDQIRAIEEQWSGNDSFHEHGYRALLIWLHGALLTQLDPAKQLYEELLCAGFPELAEKIRQFKSKTDSSSKKCAVS</sequence>
<name>AKD1B_MOUSE</name>
<protein>
    <recommendedName>
        <fullName>Ankyrin repeat and death domain-containing protein 1B</fullName>
    </recommendedName>
</protein>
<feature type="chain" id="PRO_0000332161" description="Ankyrin repeat and death domain-containing protein 1B">
    <location>
        <begin position="1"/>
        <end position="521"/>
    </location>
</feature>
<feature type="repeat" description="ANK 1">
    <location>
        <begin position="60"/>
        <end position="89"/>
    </location>
</feature>
<feature type="repeat" description="ANK 2">
    <location>
        <begin position="93"/>
        <end position="122"/>
    </location>
</feature>
<feature type="repeat" description="ANK 3">
    <location>
        <begin position="126"/>
        <end position="155"/>
    </location>
</feature>
<feature type="repeat" description="ANK 4">
    <location>
        <begin position="159"/>
        <end position="190"/>
    </location>
</feature>
<feature type="repeat" description="ANK 5">
    <location>
        <begin position="194"/>
        <end position="223"/>
    </location>
</feature>
<feature type="repeat" description="ANK 6">
    <location>
        <begin position="227"/>
        <end position="256"/>
    </location>
</feature>
<feature type="repeat" description="ANK 7">
    <location>
        <begin position="260"/>
        <end position="289"/>
    </location>
</feature>
<feature type="repeat" description="ANK 8">
    <location>
        <begin position="293"/>
        <end position="322"/>
    </location>
</feature>
<feature type="repeat" description="ANK 9">
    <location>
        <begin position="326"/>
        <end position="355"/>
    </location>
</feature>
<feature type="repeat" description="ANK 10">
    <location>
        <begin position="359"/>
        <end position="388"/>
    </location>
</feature>
<feature type="domain" description="Death" evidence="1">
    <location>
        <begin position="420"/>
        <end position="508"/>
    </location>
</feature>
<feature type="splice variant" id="VSP_046263" description="In isoform 2." evidence="2">
    <original>E</original>
    <variation>ENGETPFLLAVVGGHEECSRVLLAGGSDVNIPNK</variation>
    <location>
        <position position="259"/>
    </location>
</feature>
<feature type="sequence conflict" description="In Ref. 3; BB633264." evidence="3" ref="3">
    <original>Q</original>
    <variation>H</variation>
    <location>
        <position position="153"/>
    </location>
</feature>
<feature type="sequence conflict" description="In Ref. 3; BB633264." evidence="3" ref="3">
    <original>H</original>
    <variation>S</variation>
    <location>
        <position position="200"/>
    </location>
</feature>
<feature type="sequence conflict" description="In Ref. 3; BB633264." evidence="3" ref="3">
    <original>A</original>
    <variation>P</variation>
    <location>
        <position position="203"/>
    </location>
</feature>
<feature type="sequence conflict" description="In Ref. 3; BB633264." evidence="3" ref="3">
    <original>I</original>
    <variation>N</variation>
    <location>
        <position position="211"/>
    </location>
</feature>
<feature type="sequence conflict" description="In Ref. 3; BAC28528." evidence="3" ref="3">
    <original>NESNE</original>
    <variation>ICSLQ</variation>
    <location>
        <begin position="255"/>
        <end position="259"/>
    </location>
</feature>
<feature type="sequence conflict" description="In Ref. 2; AAI12418." evidence="3" ref="2">
    <location>
        <position position="313"/>
    </location>
</feature>
<comment type="alternative products">
    <event type="alternative splicing"/>
    <isoform>
        <id>Q14DN9-1</id>
        <name>1</name>
        <sequence type="displayed"/>
    </isoform>
    <isoform>
        <id>Q14DN9-2</id>
        <name>2</name>
        <sequence type="described" ref="VSP_046263"/>
    </isoform>
</comment>
<comment type="miscellaneous">
    <molecule>Isoform 2</molecule>
    <text evidence="3">Sequence identified by Havana.</text>
</comment>
<comment type="sequence caution" evidence="3">
    <conflict type="erroneous initiation">
        <sequence resource="EMBL-CDS" id="AAI12418"/>
    </conflict>
    <text>Extended N-terminus.</text>
</comment>
<dbReference type="EMBL" id="GL456167">
    <property type="status" value="NOT_ANNOTATED_CDS"/>
    <property type="molecule type" value="Genomic_DNA"/>
</dbReference>
<dbReference type="EMBL" id="BC112417">
    <property type="protein sequence ID" value="AAI12418.1"/>
    <property type="status" value="ALT_INIT"/>
    <property type="molecule type" value="mRNA"/>
</dbReference>
<dbReference type="EMBL" id="AK033960">
    <property type="protein sequence ID" value="BAC28528.1"/>
    <property type="molecule type" value="mRNA"/>
</dbReference>
<dbReference type="EMBL" id="BB633264">
    <property type="status" value="NOT_ANNOTATED_CDS"/>
    <property type="molecule type" value="mRNA"/>
</dbReference>
<dbReference type="CCDS" id="CCDS88501.1">
    <molecule id="Q14DN9-2"/>
</dbReference>
<dbReference type="RefSeq" id="NP_001036179.1">
    <property type="nucleotide sequence ID" value="NM_001042714.1"/>
</dbReference>
<dbReference type="RefSeq" id="NP_001356098.1">
    <molecule id="Q14DN9-2"/>
    <property type="nucleotide sequence ID" value="NM_001369169.1"/>
</dbReference>
<dbReference type="RefSeq" id="XP_006517745.1">
    <property type="nucleotide sequence ID" value="XM_006517682.2"/>
</dbReference>
<dbReference type="SMR" id="Q14DN9"/>
<dbReference type="FunCoup" id="Q14DN9">
    <property type="interactions" value="1"/>
</dbReference>
<dbReference type="PhosphoSitePlus" id="Q14DN9"/>
<dbReference type="ProteomicsDB" id="285799">
    <molecule id="Q14DN9-1"/>
</dbReference>
<dbReference type="ProteomicsDB" id="285800">
    <molecule id="Q14DN9-2"/>
</dbReference>
<dbReference type="Antibodypedia" id="71745">
    <property type="antibodies" value="53 antibodies from 11 providers"/>
</dbReference>
<dbReference type="Ensembl" id="ENSMUST00000055607.13">
    <molecule id="Q14DN9-2"/>
    <property type="protein sequence ID" value="ENSMUSP00000061643.6"/>
    <property type="gene ID" value="ENSMUSG00000047117.14"/>
</dbReference>
<dbReference type="Ensembl" id="ENSMUST00000239026.2">
    <molecule id="Q14DN9-1"/>
    <property type="protein sequence ID" value="ENSMUSP00000159079.2"/>
    <property type="gene ID" value="ENSMUSG00000047117.14"/>
</dbReference>
<dbReference type="GeneID" id="271144"/>
<dbReference type="KEGG" id="mmu:271144"/>
<dbReference type="UCSC" id="uc007rmy.1">
    <molecule id="Q14DN9-2"/>
    <property type="organism name" value="mouse"/>
</dbReference>
<dbReference type="AGR" id="MGI:2444730"/>
<dbReference type="CTD" id="728780"/>
<dbReference type="MGI" id="MGI:2444730">
    <property type="gene designation" value="Ankdd1b"/>
</dbReference>
<dbReference type="VEuPathDB" id="HostDB:ENSMUSG00000047117"/>
<dbReference type="eggNOG" id="KOG4177">
    <property type="taxonomic scope" value="Eukaryota"/>
</dbReference>
<dbReference type="GeneTree" id="ENSGT00940000154170"/>
<dbReference type="HOGENOM" id="CLU_000134_51_1_1"/>
<dbReference type="InParanoid" id="Q14DN9"/>
<dbReference type="OMA" id="SYQEHGN"/>
<dbReference type="TreeFam" id="TF333615"/>
<dbReference type="BioGRID-ORCS" id="271144">
    <property type="hits" value="3 hits in 76 CRISPR screens"/>
</dbReference>
<dbReference type="PRO" id="PR:Q14DN9"/>
<dbReference type="Proteomes" id="UP000000589">
    <property type="component" value="Chromosome 13"/>
</dbReference>
<dbReference type="RNAct" id="Q14DN9">
    <property type="molecule type" value="protein"/>
</dbReference>
<dbReference type="Bgee" id="ENSMUSG00000047117">
    <property type="expression patterns" value="Expressed in mesodermal cell in embryo and 27 other cell types or tissues"/>
</dbReference>
<dbReference type="ExpressionAtlas" id="Q14DN9">
    <property type="expression patterns" value="baseline and differential"/>
</dbReference>
<dbReference type="GO" id="GO:0007165">
    <property type="term" value="P:signal transduction"/>
    <property type="evidence" value="ECO:0007669"/>
    <property type="project" value="InterPro"/>
</dbReference>
<dbReference type="Gene3D" id="1.25.40.20">
    <property type="entry name" value="Ankyrin repeat-containing domain"/>
    <property type="match status" value="3"/>
</dbReference>
<dbReference type="Gene3D" id="1.10.533.10">
    <property type="entry name" value="Death Domain, Fas"/>
    <property type="match status" value="1"/>
</dbReference>
<dbReference type="InterPro" id="IPR052457">
    <property type="entry name" value="Ankyrin-DD_containing_protein"/>
</dbReference>
<dbReference type="InterPro" id="IPR002110">
    <property type="entry name" value="Ankyrin_rpt"/>
</dbReference>
<dbReference type="InterPro" id="IPR036770">
    <property type="entry name" value="Ankyrin_rpt-contain_sf"/>
</dbReference>
<dbReference type="InterPro" id="IPR011029">
    <property type="entry name" value="DEATH-like_dom_sf"/>
</dbReference>
<dbReference type="InterPro" id="IPR000488">
    <property type="entry name" value="Death_dom"/>
</dbReference>
<dbReference type="PANTHER" id="PTHR24125">
    <property type="entry name" value="ANKYRIN REPEAT AND DEATH DOMAIN-CONTAINING PROTEIN"/>
    <property type="match status" value="1"/>
</dbReference>
<dbReference type="PANTHER" id="PTHR24125:SF1">
    <property type="entry name" value="ANKYRIN REPEAT AND DEATH DOMAIN-CONTAINING PROTEIN 1B"/>
    <property type="match status" value="1"/>
</dbReference>
<dbReference type="Pfam" id="PF00023">
    <property type="entry name" value="Ank"/>
    <property type="match status" value="1"/>
</dbReference>
<dbReference type="Pfam" id="PF12796">
    <property type="entry name" value="Ank_2"/>
    <property type="match status" value="3"/>
</dbReference>
<dbReference type="SMART" id="SM00248">
    <property type="entry name" value="ANK"/>
    <property type="match status" value="10"/>
</dbReference>
<dbReference type="SUPFAM" id="SSF48403">
    <property type="entry name" value="Ankyrin repeat"/>
    <property type="match status" value="1"/>
</dbReference>
<dbReference type="SUPFAM" id="SSF47986">
    <property type="entry name" value="DEATH domain"/>
    <property type="match status" value="1"/>
</dbReference>
<dbReference type="PROSITE" id="PS50297">
    <property type="entry name" value="ANK_REP_REGION"/>
    <property type="match status" value="1"/>
</dbReference>
<dbReference type="PROSITE" id="PS50088">
    <property type="entry name" value="ANK_REPEAT"/>
    <property type="match status" value="8"/>
</dbReference>
<dbReference type="PROSITE" id="PS50017">
    <property type="entry name" value="DEATH_DOMAIN"/>
    <property type="match status" value="1"/>
</dbReference>
<reference key="1">
    <citation type="journal article" date="2009" name="PLoS Biol.">
        <title>Lineage-specific biology revealed by a finished genome assembly of the mouse.</title>
        <authorList>
            <person name="Church D.M."/>
            <person name="Goodstadt L."/>
            <person name="Hillier L.W."/>
            <person name="Zody M.C."/>
            <person name="Goldstein S."/>
            <person name="She X."/>
            <person name="Bult C.J."/>
            <person name="Agarwala R."/>
            <person name="Cherry J.L."/>
            <person name="DiCuccio M."/>
            <person name="Hlavina W."/>
            <person name="Kapustin Y."/>
            <person name="Meric P."/>
            <person name="Maglott D."/>
            <person name="Birtle Z."/>
            <person name="Marques A.C."/>
            <person name="Graves T."/>
            <person name="Zhou S."/>
            <person name="Teague B."/>
            <person name="Potamousis K."/>
            <person name="Churas C."/>
            <person name="Place M."/>
            <person name="Herschleb J."/>
            <person name="Runnheim R."/>
            <person name="Forrest D."/>
            <person name="Amos-Landgraf J."/>
            <person name="Schwartz D.C."/>
            <person name="Cheng Z."/>
            <person name="Lindblad-Toh K."/>
            <person name="Eichler E.E."/>
            <person name="Ponting C.P."/>
        </authorList>
    </citation>
    <scope>NUCLEOTIDE SEQUENCE [LARGE SCALE GENOMIC DNA]</scope>
    <source>
        <strain>C57BL/6J</strain>
    </source>
</reference>
<reference key="2">
    <citation type="journal article" date="2004" name="Genome Res.">
        <title>The status, quality, and expansion of the NIH full-length cDNA project: the Mammalian Gene Collection (MGC).</title>
        <authorList>
            <consortium name="The MGC Project Team"/>
        </authorList>
    </citation>
    <scope>NUCLEOTIDE SEQUENCE [LARGE SCALE MRNA] OF 93-521 (ISOFORM 2)</scope>
</reference>
<reference key="3">
    <citation type="journal article" date="2005" name="Science">
        <title>The transcriptional landscape of the mammalian genome.</title>
        <authorList>
            <person name="Carninci P."/>
            <person name="Kasukawa T."/>
            <person name="Katayama S."/>
            <person name="Gough J."/>
            <person name="Frith M.C."/>
            <person name="Maeda N."/>
            <person name="Oyama R."/>
            <person name="Ravasi T."/>
            <person name="Lenhard B."/>
            <person name="Wells C."/>
            <person name="Kodzius R."/>
            <person name="Shimokawa K."/>
            <person name="Bajic V.B."/>
            <person name="Brenner S.E."/>
            <person name="Batalov S."/>
            <person name="Forrest A.R."/>
            <person name="Zavolan M."/>
            <person name="Davis M.J."/>
            <person name="Wilming L.G."/>
            <person name="Aidinis V."/>
            <person name="Allen J.E."/>
            <person name="Ambesi-Impiombato A."/>
            <person name="Apweiler R."/>
            <person name="Aturaliya R.N."/>
            <person name="Bailey T.L."/>
            <person name="Bansal M."/>
            <person name="Baxter L."/>
            <person name="Beisel K.W."/>
            <person name="Bersano T."/>
            <person name="Bono H."/>
            <person name="Chalk A.M."/>
            <person name="Chiu K.P."/>
            <person name="Choudhary V."/>
            <person name="Christoffels A."/>
            <person name="Clutterbuck D.R."/>
            <person name="Crowe M.L."/>
            <person name="Dalla E."/>
            <person name="Dalrymple B.P."/>
            <person name="de Bono B."/>
            <person name="Della Gatta G."/>
            <person name="di Bernardo D."/>
            <person name="Down T."/>
            <person name="Engstrom P."/>
            <person name="Fagiolini M."/>
            <person name="Faulkner G."/>
            <person name="Fletcher C.F."/>
            <person name="Fukushima T."/>
            <person name="Furuno M."/>
            <person name="Futaki S."/>
            <person name="Gariboldi M."/>
            <person name="Georgii-Hemming P."/>
            <person name="Gingeras T.R."/>
            <person name="Gojobori T."/>
            <person name="Green R.E."/>
            <person name="Gustincich S."/>
            <person name="Harbers M."/>
            <person name="Hayashi Y."/>
            <person name="Hensch T.K."/>
            <person name="Hirokawa N."/>
            <person name="Hill D."/>
            <person name="Huminiecki L."/>
            <person name="Iacono M."/>
            <person name="Ikeo K."/>
            <person name="Iwama A."/>
            <person name="Ishikawa T."/>
            <person name="Jakt M."/>
            <person name="Kanapin A."/>
            <person name="Katoh M."/>
            <person name="Kawasawa Y."/>
            <person name="Kelso J."/>
            <person name="Kitamura H."/>
            <person name="Kitano H."/>
            <person name="Kollias G."/>
            <person name="Krishnan S.P."/>
            <person name="Kruger A."/>
            <person name="Kummerfeld S.K."/>
            <person name="Kurochkin I.V."/>
            <person name="Lareau L.F."/>
            <person name="Lazarevic D."/>
            <person name="Lipovich L."/>
            <person name="Liu J."/>
            <person name="Liuni S."/>
            <person name="McWilliam S."/>
            <person name="Madan Babu M."/>
            <person name="Madera M."/>
            <person name="Marchionni L."/>
            <person name="Matsuda H."/>
            <person name="Matsuzawa S."/>
            <person name="Miki H."/>
            <person name="Mignone F."/>
            <person name="Miyake S."/>
            <person name="Morris K."/>
            <person name="Mottagui-Tabar S."/>
            <person name="Mulder N."/>
            <person name="Nakano N."/>
            <person name="Nakauchi H."/>
            <person name="Ng P."/>
            <person name="Nilsson R."/>
            <person name="Nishiguchi S."/>
            <person name="Nishikawa S."/>
            <person name="Nori F."/>
            <person name="Ohara O."/>
            <person name="Okazaki Y."/>
            <person name="Orlando V."/>
            <person name="Pang K.C."/>
            <person name="Pavan W.J."/>
            <person name="Pavesi G."/>
            <person name="Pesole G."/>
            <person name="Petrovsky N."/>
            <person name="Piazza S."/>
            <person name="Reed J."/>
            <person name="Reid J.F."/>
            <person name="Ring B.Z."/>
            <person name="Ringwald M."/>
            <person name="Rost B."/>
            <person name="Ruan Y."/>
            <person name="Salzberg S.L."/>
            <person name="Sandelin A."/>
            <person name="Schneider C."/>
            <person name="Schoenbach C."/>
            <person name="Sekiguchi K."/>
            <person name="Semple C.A."/>
            <person name="Seno S."/>
            <person name="Sessa L."/>
            <person name="Sheng Y."/>
            <person name="Shibata Y."/>
            <person name="Shimada H."/>
            <person name="Shimada K."/>
            <person name="Silva D."/>
            <person name="Sinclair B."/>
            <person name="Sperling S."/>
            <person name="Stupka E."/>
            <person name="Sugiura K."/>
            <person name="Sultana R."/>
            <person name="Takenaka Y."/>
            <person name="Taki K."/>
            <person name="Tammoja K."/>
            <person name="Tan S.L."/>
            <person name="Tang S."/>
            <person name="Taylor M.S."/>
            <person name="Tegner J."/>
            <person name="Teichmann S.A."/>
            <person name="Ueda H.R."/>
            <person name="van Nimwegen E."/>
            <person name="Verardo R."/>
            <person name="Wei C.L."/>
            <person name="Yagi K."/>
            <person name="Yamanishi H."/>
            <person name="Zabarovsky E."/>
            <person name="Zhu S."/>
            <person name="Zimmer A."/>
            <person name="Hide W."/>
            <person name="Bult C."/>
            <person name="Grimmond S.M."/>
            <person name="Teasdale R.D."/>
            <person name="Liu E.T."/>
            <person name="Brusic V."/>
            <person name="Quackenbush J."/>
            <person name="Wahlestedt C."/>
            <person name="Mattick J.S."/>
            <person name="Hume D.A."/>
            <person name="Kai C."/>
            <person name="Sasaki D."/>
            <person name="Tomaru Y."/>
            <person name="Fukuda S."/>
            <person name="Kanamori-Katayama M."/>
            <person name="Suzuki M."/>
            <person name="Aoki J."/>
            <person name="Arakawa T."/>
            <person name="Iida J."/>
            <person name="Imamura K."/>
            <person name="Itoh M."/>
            <person name="Kato T."/>
            <person name="Kawaji H."/>
            <person name="Kawagashira N."/>
            <person name="Kawashima T."/>
            <person name="Kojima M."/>
            <person name="Kondo S."/>
            <person name="Konno H."/>
            <person name="Nakano K."/>
            <person name="Ninomiya N."/>
            <person name="Nishio T."/>
            <person name="Okada M."/>
            <person name="Plessy C."/>
            <person name="Shibata K."/>
            <person name="Shiraki T."/>
            <person name="Suzuki S."/>
            <person name="Tagami M."/>
            <person name="Waki K."/>
            <person name="Watahiki A."/>
            <person name="Okamura-Oho Y."/>
            <person name="Suzuki H."/>
            <person name="Kawai J."/>
            <person name="Hayashizaki Y."/>
        </authorList>
    </citation>
    <scope>NUCLEOTIDE SEQUENCE [LARGE SCALE MRNA] OF 255-521 (ISOFORM 1)</scope>
    <scope>NUCLEOTIDE SEQUENCE [LARGE SCALE MRNA] OF 1-92 AND 126-217 (ISOFORMS 1/2)</scope>
    <source>
        <strain>C57BL/6J</strain>
        <tissue>Diencephalon</tissue>
        <tissue>Spinal cord</tissue>
    </source>
</reference>
<evidence type="ECO:0000255" key="1">
    <source>
        <dbReference type="PROSITE-ProRule" id="PRU00064"/>
    </source>
</evidence>
<evidence type="ECO:0000303" key="2">
    <source>
    </source>
</evidence>
<evidence type="ECO:0000305" key="3"/>
<proteinExistence type="evidence at transcript level"/>
<organism>
    <name type="scientific">Mus musculus</name>
    <name type="common">Mouse</name>
    <dbReference type="NCBI Taxonomy" id="10090"/>
    <lineage>
        <taxon>Eukaryota</taxon>
        <taxon>Metazoa</taxon>
        <taxon>Chordata</taxon>
        <taxon>Craniata</taxon>
        <taxon>Vertebrata</taxon>
        <taxon>Euteleostomi</taxon>
        <taxon>Mammalia</taxon>
        <taxon>Eutheria</taxon>
        <taxon>Euarchontoglires</taxon>
        <taxon>Glires</taxon>
        <taxon>Rodentia</taxon>
        <taxon>Myomorpha</taxon>
        <taxon>Muroidea</taxon>
        <taxon>Muridae</taxon>
        <taxon>Murinae</taxon>
        <taxon>Mus</taxon>
        <taxon>Mus</taxon>
    </lineage>
</organism>